<sequence>MQDDESSQIFMGPEGDQLPLVEMGSCKPEASDQWDCVLVADLQTLKIQKHAQKQLQFLENLESNGFHFKMLKDQKKVFFGIRADSDVIDKYRTLLMNPEDSGSRDEQSFNIATTRIRIVSFVVNNKLKPGDTFEDLVKDGVFETMFLLHKGEQNLKNIWARWRNMFEPQPIDEIREYFGEKVALYFTWLGWYTYMLVPAAVVGLIVFLSGFALFDSSQISKEICSANDIFMCPLGDHSHRYLRLSEMCTFAKLTHLFDNEGTVLFAIFMALWATVFLEIWKRKRAHEVQSWKLYEWDEEEEEMALELINSPHYKLKDHRHSYLSSTIILILSLFMICLMIGMAHVLVVYRVLAGALFSSLVKQQVTTAVVVTGAVVHYIIIVIMTKVNKYVALKLCKFEESGTFSEQERKFTVKFFILQFFAHFSSLIYIAFILGRINGHPGKSTRLAGLWKLEECHLSGCMMDLFIQMAIIMGLKQTLSNCVEYLCPLLAHKWRLMWASKHGHMSKDPELKEWQRNYYMNPINTFSLFDEFMEMMIQYGFTTIFVAAFPLAPLLALFSNLVEIRLDAIKMVRLQRRLVPRKAKDIGTWLQVLETIGVLAVIANGMVIAFTSEFIPRVVYKYHYGPCRTNRTFTDDCLTNYVNHSLSVFYTKHFNDHSRMEGQENVTVCRYRDYRNEHDYNLSEQFWFILAIRLTFVILFEHFALCIKLIAAWFVPDVPQKVKNEVLQEKYDRIRHRMRFSSRSTDV</sequence>
<dbReference type="EMBL" id="AC109272">
    <property type="status" value="NOT_ANNOTATED_CDS"/>
    <property type="molecule type" value="Genomic_DNA"/>
</dbReference>
<dbReference type="CCDS" id="CCDS52438.1"/>
<dbReference type="RefSeq" id="NP_848468.2">
    <property type="nucleotide sequence ID" value="NM_178381.3"/>
</dbReference>
<dbReference type="SMR" id="P86044"/>
<dbReference type="FunCoup" id="P86044">
    <property type="interactions" value="35"/>
</dbReference>
<dbReference type="STRING" id="10090.ENSMUSP00000067689"/>
<dbReference type="SwissLipids" id="SLP:000000376"/>
<dbReference type="GlyCosmos" id="P86044">
    <property type="glycosylation" value="4 sites, No reported glycans"/>
</dbReference>
<dbReference type="GlyGen" id="P86044">
    <property type="glycosylation" value="4 sites"/>
</dbReference>
<dbReference type="iPTMnet" id="P86044"/>
<dbReference type="PhosphoSitePlus" id="P86044"/>
<dbReference type="PaxDb" id="10090-ENSMUSP00000067689"/>
<dbReference type="PeptideAtlas" id="P86044"/>
<dbReference type="ProteomicsDB" id="296313"/>
<dbReference type="Antibodypedia" id="58906">
    <property type="antibodies" value="67 antibodies from 20 providers"/>
</dbReference>
<dbReference type="DNASU" id="71345"/>
<dbReference type="Ensembl" id="ENSMUST00000067836.9">
    <property type="protein sequence ID" value="ENSMUSP00000067689.8"/>
    <property type="gene ID" value="ENSMUSG00000054662.9"/>
</dbReference>
<dbReference type="GeneID" id="71345"/>
<dbReference type="KEGG" id="mmu:71345"/>
<dbReference type="UCSC" id="uc012fwo.1">
    <property type="organism name" value="mouse"/>
</dbReference>
<dbReference type="AGR" id="MGI:1918595"/>
<dbReference type="CTD" id="338440"/>
<dbReference type="MGI" id="MGI:1918595">
    <property type="gene designation" value="Ano9"/>
</dbReference>
<dbReference type="VEuPathDB" id="HostDB:ENSMUSG00000054662"/>
<dbReference type="eggNOG" id="KOG2514">
    <property type="taxonomic scope" value="Eukaryota"/>
</dbReference>
<dbReference type="GeneTree" id="ENSGT00940000158300"/>
<dbReference type="HOGENOM" id="CLU_006685_3_1_1"/>
<dbReference type="InParanoid" id="P86044"/>
<dbReference type="OMA" id="KTWARWR"/>
<dbReference type="OrthoDB" id="296386at2759"/>
<dbReference type="PhylomeDB" id="P86044"/>
<dbReference type="TreeFam" id="TF314265"/>
<dbReference type="Reactome" id="R-MMU-2672351">
    <property type="pathway name" value="Stimuli-sensing channels"/>
</dbReference>
<dbReference type="BioGRID-ORCS" id="71345">
    <property type="hits" value="4 hits in 77 CRISPR screens"/>
</dbReference>
<dbReference type="ChiTaRS" id="Ano9">
    <property type="organism name" value="mouse"/>
</dbReference>
<dbReference type="PRO" id="PR:P86044"/>
<dbReference type="Proteomes" id="UP000000589">
    <property type="component" value="Chromosome 7"/>
</dbReference>
<dbReference type="RNAct" id="P86044">
    <property type="molecule type" value="protein"/>
</dbReference>
<dbReference type="Bgee" id="ENSMUSG00000054662">
    <property type="expression patterns" value="Expressed in lip and 81 other cell types or tissues"/>
</dbReference>
<dbReference type="GO" id="GO:0005783">
    <property type="term" value="C:endoplasmic reticulum"/>
    <property type="evidence" value="ECO:0000314"/>
    <property type="project" value="UniProtKB"/>
</dbReference>
<dbReference type="GO" id="GO:0005886">
    <property type="term" value="C:plasma membrane"/>
    <property type="evidence" value="ECO:0000314"/>
    <property type="project" value="UniProtKB"/>
</dbReference>
<dbReference type="GO" id="GO:0005262">
    <property type="term" value="F:calcium channel activity"/>
    <property type="evidence" value="ECO:0000314"/>
    <property type="project" value="UniProtKB"/>
</dbReference>
<dbReference type="GO" id="GO:0015267">
    <property type="term" value="F:channel activity"/>
    <property type="evidence" value="ECO:0000314"/>
    <property type="project" value="UniProtKB"/>
</dbReference>
<dbReference type="GO" id="GO:0019869">
    <property type="term" value="F:chloride channel inhibitor activity"/>
    <property type="evidence" value="ECO:0007669"/>
    <property type="project" value="Ensembl"/>
</dbReference>
<dbReference type="GO" id="GO:0005229">
    <property type="term" value="F:intracellularly calcium-gated chloride channel activity"/>
    <property type="evidence" value="ECO:0007669"/>
    <property type="project" value="Ensembl"/>
</dbReference>
<dbReference type="GO" id="GO:0017128">
    <property type="term" value="F:phospholipid scramblase activity"/>
    <property type="evidence" value="ECO:0000314"/>
    <property type="project" value="MGI"/>
</dbReference>
<dbReference type="GO" id="GO:0061591">
    <property type="term" value="P:calcium activated galactosylceramide scrambling"/>
    <property type="evidence" value="ECO:0000314"/>
    <property type="project" value="MGI"/>
</dbReference>
<dbReference type="GO" id="GO:0061590">
    <property type="term" value="P:calcium activated phosphatidylcholine scrambling"/>
    <property type="evidence" value="ECO:0000314"/>
    <property type="project" value="MGI"/>
</dbReference>
<dbReference type="GO" id="GO:0061589">
    <property type="term" value="P:calcium activated phosphatidylserine scrambling"/>
    <property type="evidence" value="ECO:0000314"/>
    <property type="project" value="MGI"/>
</dbReference>
<dbReference type="GO" id="GO:0051649">
    <property type="term" value="P:establishment of localization in cell"/>
    <property type="evidence" value="ECO:0000314"/>
    <property type="project" value="MGI"/>
</dbReference>
<dbReference type="GO" id="GO:0006629">
    <property type="term" value="P:lipid metabolic process"/>
    <property type="evidence" value="ECO:0007669"/>
    <property type="project" value="UniProtKB-KW"/>
</dbReference>
<dbReference type="GO" id="GO:0007608">
    <property type="term" value="P:sensory perception of smell"/>
    <property type="evidence" value="ECO:0000315"/>
    <property type="project" value="UniProtKB"/>
</dbReference>
<dbReference type="InterPro" id="IPR007632">
    <property type="entry name" value="Anoctamin"/>
</dbReference>
<dbReference type="InterPro" id="IPR049452">
    <property type="entry name" value="Anoctamin_TM"/>
</dbReference>
<dbReference type="PANTHER" id="PTHR12308">
    <property type="entry name" value="ANOCTAMIN"/>
    <property type="match status" value="1"/>
</dbReference>
<dbReference type="PANTHER" id="PTHR12308:SF37">
    <property type="entry name" value="ANOCTAMIN-9"/>
    <property type="match status" value="1"/>
</dbReference>
<dbReference type="Pfam" id="PF04547">
    <property type="entry name" value="Anoctamin"/>
    <property type="match status" value="1"/>
</dbReference>
<reference key="1">
    <citation type="journal article" date="2009" name="PLoS Biol.">
        <title>Lineage-specific biology revealed by a finished genome assembly of the mouse.</title>
        <authorList>
            <person name="Church D.M."/>
            <person name="Goodstadt L."/>
            <person name="Hillier L.W."/>
            <person name="Zody M.C."/>
            <person name="Goldstein S."/>
            <person name="She X."/>
            <person name="Bult C.J."/>
            <person name="Agarwala R."/>
            <person name="Cherry J.L."/>
            <person name="DiCuccio M."/>
            <person name="Hlavina W."/>
            <person name="Kapustin Y."/>
            <person name="Meric P."/>
            <person name="Maglott D."/>
            <person name="Birtle Z."/>
            <person name="Marques A.C."/>
            <person name="Graves T."/>
            <person name="Zhou S."/>
            <person name="Teague B."/>
            <person name="Potamousis K."/>
            <person name="Churas C."/>
            <person name="Place M."/>
            <person name="Herschleb J."/>
            <person name="Runnheim R."/>
            <person name="Forrest D."/>
            <person name="Amos-Landgraf J."/>
            <person name="Schwartz D.C."/>
            <person name="Cheng Z."/>
            <person name="Lindblad-Toh K."/>
            <person name="Eichler E.E."/>
            <person name="Ponting C.P."/>
        </authorList>
    </citation>
    <scope>NUCLEOTIDE SEQUENCE [LARGE SCALE GENOMIC DNA]</scope>
    <source>
        <strain>C57BL/6J</strain>
    </source>
</reference>
<reference evidence="9" key="2">
    <citation type="journal article" date="2008" name="Dev. Dyn.">
        <title>Expression of TMEM16 paralogs during murine embryogenesis.</title>
        <authorList>
            <person name="Rock J.R."/>
            <person name="Harfe B.D."/>
        </authorList>
    </citation>
    <scope>DEVELOPMENTAL STAGE</scope>
</reference>
<reference key="3">
    <citation type="journal article" date="2010" name="J. Biol. Chem.">
        <title>Expression and function of epithelial anoctamins.</title>
        <authorList>
            <person name="Schreiber R."/>
            <person name="Uliyakina I."/>
            <person name="Kongsuphol P."/>
            <person name="Warth R."/>
            <person name="Mirza M."/>
            <person name="Martins J.R."/>
            <person name="Kunzelmann K."/>
        </authorList>
    </citation>
    <scope>TISSUE SPECIFICITY</scope>
</reference>
<reference key="4">
    <citation type="journal article" date="2012" name="Exp. Physiol.">
        <title>The anoctamin (TMEM16) gene family: calcium-activated chloride channels come of age.</title>
        <authorList>
            <person name="Winpenny J.P."/>
            <person name="Gray M.A."/>
        </authorList>
    </citation>
    <scope>REVIEW</scope>
</reference>
<reference key="5">
    <citation type="journal article" date="2013" name="J. Biol. Chem.">
        <title>Calcium-dependent phospholipid scramblase activity of TMEM16 protein family members.</title>
        <authorList>
            <person name="Suzuki J."/>
            <person name="Fujii T."/>
            <person name="Imao T."/>
            <person name="Ishihara K."/>
            <person name="Kuba H."/>
            <person name="Nagata S."/>
        </authorList>
    </citation>
    <scope>FUNCTION</scope>
    <scope>CATALYTIC ACTIVITY</scope>
    <scope>TISSUE SPECIFICITY</scope>
</reference>
<reference key="6">
    <citation type="journal article" date="2018" name="Cell Calcium">
        <title>Anoctamin 9/TMEM16J is a cation channel activated by cAMP/PKA signal.</title>
        <authorList>
            <person name="Kim H."/>
            <person name="Kim H."/>
            <person name="Lee J."/>
            <person name="Lee B."/>
            <person name="Kim H.R."/>
            <person name="Jung J."/>
            <person name="Lee M.O."/>
            <person name="Oh U."/>
        </authorList>
    </citation>
    <scope>FUNCTION</scope>
    <scope>TRANSPORTER ACTIVITY</scope>
    <scope>SUBCELLULAR LOCATION</scope>
    <scope>PHOSPHORYLATION</scope>
    <scope>ACTIVITY REGULATION</scope>
    <scope>TISSUE SPECIFICITY</scope>
</reference>
<reference key="7">
    <citation type="journal article" date="2022" name="Prog. Neurobiol.">
        <title>Amplification of olfactory signals by Anoctamin 9 is important for mammalian olfaction.</title>
        <authorList>
            <person name="Kim H."/>
            <person name="Kim H."/>
            <person name="Nguyen L.T."/>
            <person name="Ha T."/>
            <person name="Lim S."/>
            <person name="Kim K."/>
            <person name="Kim S.H."/>
            <person name="Han K."/>
            <person name="Hyeon S.J."/>
            <person name="Ryu H."/>
            <person name="Park Y.S."/>
            <person name="Kim S.H."/>
            <person name="Kim I.B."/>
            <person name="Hong G.S."/>
            <person name="Lee S.E."/>
            <person name="Choi Y."/>
            <person name="Cohen L.B."/>
            <person name="Oh U."/>
        </authorList>
    </citation>
    <scope>FUNCTION</scope>
    <scope>ACTIVITY REGULATION</scope>
    <scope>SUBCELLULAR LOCATION</scope>
    <scope>DISRUPTION PHENOTYPE</scope>
    <scope>TISSUE SPECIFICITY</scope>
    <scope>PHOSPHORYLATION AT SER-245</scope>
    <scope>MUTAGENESIS OF SER-245</scope>
</reference>
<reference key="8">
    <citation type="journal article" date="2023" name="FASEB J.">
        <title>A TMEM16J variant leads to dysregulated cytosolic calcium which may lead to renal disease.</title>
        <authorList>
            <person name="Schreiber R."/>
            <person name="Talbi K."/>
            <person name="Ousingsawat J."/>
            <person name="Kunzelmann K."/>
        </authorList>
    </citation>
    <scope>SUBCELLULAR LOCATION</scope>
    <scope>TISSUE SPECIFICITY</scope>
</reference>
<proteinExistence type="evidence at protein level"/>
<comment type="function">
    <text evidence="1 5 6 7">PKA-activated nonselective cation channel (PubMed:29604966, PubMed:36330924). Discriminates poorly among cations but is more permeable to Ca(2+) ions than to monovalent cations (PubMed:29604966). Acts as a calcium-activated calcium permeable channel which may operate as a endoplasmic reticulum (ER) Ca(2+)-leak channel, reducing the loading of the ER Ca(2+) store (By similarity). Regulates intracellular Ca2+ signals, ion channel activity, and cytokine release in the renal tissue (By similarity). Plays an important role in olfaction, amplifying cAMP-evoked cyclic nucleotide-gated (CNG) channel currents in the olfactory sensory neurons (PubMed:36330924). Has calcium-dependent phospholipid scramblase activity; scrambles phosphatidylserine, phosphatidylcholine and galactosylceramide (PubMed:23532839). Does not exhibit calcium-activated chloride channel (CaCC) activity (By similarity). Can inhibit the activity of ANO1 (By similarity).</text>
</comment>
<comment type="catalytic activity">
    <reaction evidence="5">
        <text>a 1,2-diacyl-sn-glycero-3-phospho-L-serine(in) = a 1,2-diacyl-sn-glycero-3-phospho-L-serine(out)</text>
        <dbReference type="Rhea" id="RHEA:38663"/>
        <dbReference type="ChEBI" id="CHEBI:57262"/>
    </reaction>
    <physiologicalReaction direction="left-to-right" evidence="10">
        <dbReference type="Rhea" id="RHEA:38664"/>
    </physiologicalReaction>
</comment>
<comment type="catalytic activity">
    <reaction evidence="5">
        <text>a beta-D-galactosyl-(1&lt;-&gt;1')-N-acylsphing-4-enine(out) = a beta-D-galactosyl-(1&lt;-&gt;1')-N-acylsphing-4-enine(in)</text>
        <dbReference type="Rhea" id="RHEA:38899"/>
        <dbReference type="ChEBI" id="CHEBI:18390"/>
    </reaction>
    <physiologicalReaction direction="left-to-right" evidence="10">
        <dbReference type="Rhea" id="RHEA:38900"/>
    </physiologicalReaction>
</comment>
<comment type="catalytic activity">
    <reaction evidence="5">
        <text>a 1,2-diacyl-sn-glycero-3-phosphocholine(in) = a 1,2-diacyl-sn-glycero-3-phosphocholine(out)</text>
        <dbReference type="Rhea" id="RHEA:38571"/>
        <dbReference type="ChEBI" id="CHEBI:57643"/>
    </reaction>
    <physiologicalReaction direction="right-to-left" evidence="10">
        <dbReference type="Rhea" id="RHEA:38573"/>
    </physiologicalReaction>
</comment>
<comment type="catalytic activity">
    <reaction evidence="6">
        <text>Ca(2+)(in) = Ca(2+)(out)</text>
        <dbReference type="Rhea" id="RHEA:29671"/>
        <dbReference type="ChEBI" id="CHEBI:29108"/>
    </reaction>
</comment>
<comment type="catalytic activity">
    <reaction evidence="6">
        <text>Na(+)(in) = Na(+)(out)</text>
        <dbReference type="Rhea" id="RHEA:34963"/>
        <dbReference type="ChEBI" id="CHEBI:29101"/>
    </reaction>
</comment>
<comment type="catalytic activity">
    <reaction evidence="6">
        <text>K(+)(in) = K(+)(out)</text>
        <dbReference type="Rhea" id="RHEA:29463"/>
        <dbReference type="ChEBI" id="CHEBI:29103"/>
    </reaction>
</comment>
<comment type="activity regulation">
    <text evidence="6 7">Cation channel activity is activated via phosphorylation on Ser-245 by cAMP-dependent protein kinase A (PKA) (PubMed:29604966, PubMed:36330924). Inhibited by NaCl (PubMed:29604966).</text>
</comment>
<comment type="subcellular location">
    <subcellularLocation>
        <location evidence="6 7">Cell membrane</location>
        <topology evidence="2">Multi-pass membrane protein</topology>
    </subcellularLocation>
    <subcellularLocation>
        <location evidence="7">Endoplasmic reticulum</location>
    </subcellularLocation>
    <text evidence="1">Shows predominantly an intracellular localization with a weak expression in the cell membrane.</text>
</comment>
<comment type="tissue specificity">
    <text evidence="4 5 6 7 8">Highly expressed in the olfactory epithelium, particularly in mature olfactory sensory neurons (at protein level) (PubMed:36330924). Expressed in the kidney (at protein level) (PubMed:36520003). Predominant expression seen in epithelial tissues (PubMed:20056604, PubMed:23532839). Highly expressed in the small intestine, colon and stomach (PubMed:29604966).</text>
</comment>
<comment type="developmental stage">
    <text evidence="3">In the developing respiratory system, expression is restricted to the lung epithelium at 14.5 dpc. At 14.5 dpc and 16.5 dpc, expressed in the epithelium of the esophagus, small intestine, stomach and pancreas. At 16.5 dpc, detected in bronchial epithelium. In the developing skeleton, expressed in the perichondria of developing ribs at 14.5 dpc. In developing skin, expression is detected in the most suprabasal layers at 16.5 dpc.</text>
</comment>
<comment type="PTM">
    <text evidence="6 7">Phosphorylation on Ser-245 by cAMP-dependent protein kinase A (PKA)is essential for activation of its cation channel activity.</text>
</comment>
<comment type="disruption phenotype">
    <text evidence="7">Knockout mice show reduced olfactory behavioral sensitivity, electro-olfactogram signals and neural activity in the olfactory bulb (PubMed:36330924). Conditional knockout in olfactory sensory neurons results in impaired odor discrimination (PubMed:36330924).</text>
</comment>
<comment type="miscellaneous">
    <text>The term 'anoctamin' was coined because these channels are anion selective and have eight (OCT) transmembrane segments. There is some dissatisfaction in the field with the Ano nomenclature because it is not certain that all the members of this family are anion channels or have the 8-transmembrane topology.</text>
</comment>
<comment type="similarity">
    <text evidence="1">Belongs to the anoctamin family.</text>
</comment>
<accession>P86044</accession>
<feature type="chain" id="PRO_0000353191" description="Anoctamin-9">
    <location>
        <begin position="1"/>
        <end position="747"/>
    </location>
</feature>
<feature type="topological domain" description="Cytoplasmic" evidence="2">
    <location>
        <begin position="1"/>
        <end position="193"/>
    </location>
</feature>
<feature type="transmembrane region" description="Helical" evidence="2">
    <location>
        <begin position="194"/>
        <end position="214"/>
    </location>
</feature>
<feature type="topological domain" description="Extracellular" evidence="2">
    <location>
        <begin position="215"/>
        <end position="259"/>
    </location>
</feature>
<feature type="transmembrane region" description="Helical" evidence="2">
    <location>
        <begin position="260"/>
        <end position="280"/>
    </location>
</feature>
<feature type="topological domain" description="Cytoplasmic" evidence="2">
    <location>
        <begin position="281"/>
        <end position="326"/>
    </location>
</feature>
<feature type="transmembrane region" description="Helical" evidence="2">
    <location>
        <begin position="327"/>
        <end position="347"/>
    </location>
</feature>
<feature type="topological domain" description="Extracellular" evidence="2">
    <location>
        <begin position="348"/>
        <end position="364"/>
    </location>
</feature>
<feature type="transmembrane region" description="Helical" evidence="2">
    <location>
        <begin position="365"/>
        <end position="385"/>
    </location>
</feature>
<feature type="topological domain" description="Cytoplasmic" evidence="2">
    <location>
        <begin position="386"/>
        <end position="414"/>
    </location>
</feature>
<feature type="transmembrane region" description="Helical" evidence="2">
    <location>
        <begin position="415"/>
        <end position="435"/>
    </location>
</feature>
<feature type="topological domain" description="Extracellular" evidence="2">
    <location>
        <begin position="436"/>
        <end position="543"/>
    </location>
</feature>
<feature type="transmembrane region" description="Helical" evidence="2">
    <location>
        <begin position="544"/>
        <end position="564"/>
    </location>
</feature>
<feature type="topological domain" description="Cytoplasmic" evidence="2">
    <location>
        <begin position="565"/>
        <end position="595"/>
    </location>
</feature>
<feature type="transmembrane region" description="Helical" evidence="2">
    <location>
        <begin position="596"/>
        <end position="616"/>
    </location>
</feature>
<feature type="topological domain" description="Extracellular" evidence="2">
    <location>
        <begin position="617"/>
        <end position="695"/>
    </location>
</feature>
<feature type="transmembrane region" description="Helical" evidence="2">
    <location>
        <begin position="696"/>
        <end position="716"/>
    </location>
</feature>
<feature type="topological domain" description="Cytoplasmic" evidence="2">
    <location>
        <begin position="717"/>
        <end position="747"/>
    </location>
</feature>
<feature type="modified residue" description="Phosphoserine; by PKA" evidence="7">
    <location>
        <position position="245"/>
    </location>
</feature>
<feature type="glycosylation site" description="N-linked (GlcNAc...) asparagine" evidence="2">
    <location>
        <position position="630"/>
    </location>
</feature>
<feature type="glycosylation site" description="N-linked (GlcNAc...) asparagine" evidence="2">
    <location>
        <position position="643"/>
    </location>
</feature>
<feature type="glycosylation site" description="N-linked (GlcNAc...) asparagine" evidence="2">
    <location>
        <position position="665"/>
    </location>
</feature>
<feature type="glycosylation site" description="N-linked (GlcNAc...) asparagine" evidence="2">
    <location>
        <position position="681"/>
    </location>
</feature>
<feature type="mutagenesis site" description="Loss of activation of its channel activity by cAMP-dependent protein kinase A (PKA)." evidence="7">
    <original>S</original>
    <variation>A</variation>
    <location>
        <position position="245"/>
    </location>
</feature>
<keyword id="KW-1003">Cell membrane</keyword>
<keyword id="KW-0256">Endoplasmic reticulum</keyword>
<keyword id="KW-0325">Glycoprotein</keyword>
<keyword id="KW-0443">Lipid metabolism</keyword>
<keyword id="KW-0445">Lipid transport</keyword>
<keyword id="KW-0472">Membrane</keyword>
<keyword id="KW-0597">Phosphoprotein</keyword>
<keyword id="KW-1185">Reference proteome</keyword>
<keyword id="KW-0812">Transmembrane</keyword>
<keyword id="KW-1133">Transmembrane helix</keyword>
<keyword id="KW-0813">Transport</keyword>
<name>ANO9_MOUSE</name>
<evidence type="ECO:0000250" key="1">
    <source>
        <dbReference type="UniProtKB" id="A1A5B4"/>
    </source>
</evidence>
<evidence type="ECO:0000255" key="2"/>
<evidence type="ECO:0000269" key="3">
    <source>
    </source>
</evidence>
<evidence type="ECO:0000269" key="4">
    <source>
    </source>
</evidence>
<evidence type="ECO:0000269" key="5">
    <source>
    </source>
</evidence>
<evidence type="ECO:0000269" key="6">
    <source>
    </source>
</evidence>
<evidence type="ECO:0000269" key="7">
    <source>
    </source>
</evidence>
<evidence type="ECO:0000269" key="8">
    <source>
    </source>
</evidence>
<evidence type="ECO:0000305" key="9"/>
<evidence type="ECO:0000305" key="10">
    <source>
    </source>
</evidence>
<organism>
    <name type="scientific">Mus musculus</name>
    <name type="common">Mouse</name>
    <dbReference type="NCBI Taxonomy" id="10090"/>
    <lineage>
        <taxon>Eukaryota</taxon>
        <taxon>Metazoa</taxon>
        <taxon>Chordata</taxon>
        <taxon>Craniata</taxon>
        <taxon>Vertebrata</taxon>
        <taxon>Euteleostomi</taxon>
        <taxon>Mammalia</taxon>
        <taxon>Eutheria</taxon>
        <taxon>Euarchontoglires</taxon>
        <taxon>Glires</taxon>
        <taxon>Rodentia</taxon>
        <taxon>Myomorpha</taxon>
        <taxon>Muroidea</taxon>
        <taxon>Muridae</taxon>
        <taxon>Murinae</taxon>
        <taxon>Mus</taxon>
        <taxon>Mus</taxon>
    </lineage>
</organism>
<gene>
    <name evidence="1" type="primary">Ano9</name>
    <name evidence="1" type="synonym">Tmem16j</name>
</gene>
<protein>
    <recommendedName>
        <fullName evidence="1">Anoctamin-9</fullName>
    </recommendedName>
    <alternativeName>
        <fullName evidence="1">Transmembrane protein 16J</fullName>
    </alternativeName>
</protein>